<feature type="initiator methionine" description="Removed" evidence="2">
    <location>
        <position position="1"/>
    </location>
</feature>
<feature type="chain" id="PRO_0000208699" description="GTP-binding nuclear protein Ran, testis-specific isoform">
    <location>
        <begin position="2"/>
        <end position="216"/>
    </location>
</feature>
<feature type="domain" description="Small GTPase Ran-type" evidence="4">
    <location>
        <begin position="7"/>
        <end position="171"/>
    </location>
</feature>
<feature type="region of interest" description="Switch-I" evidence="4">
    <location>
        <begin position="37"/>
        <end position="45"/>
    </location>
</feature>
<feature type="region of interest" description="Switch-II" evidence="4">
    <location>
        <begin position="68"/>
        <end position="84"/>
    </location>
</feature>
<feature type="binding site" evidence="1">
    <location>
        <begin position="17"/>
        <end position="24"/>
    </location>
    <ligand>
        <name>GTP</name>
        <dbReference type="ChEBI" id="CHEBI:37565"/>
    </ligand>
</feature>
<feature type="binding site" evidence="1">
    <location>
        <begin position="65"/>
        <end position="69"/>
    </location>
    <ligand>
        <name>GTP</name>
        <dbReference type="ChEBI" id="CHEBI:37565"/>
    </ligand>
</feature>
<feature type="binding site" evidence="1">
    <location>
        <begin position="122"/>
        <end position="125"/>
    </location>
    <ligand>
        <name>GTP</name>
        <dbReference type="ChEBI" id="CHEBI:37565"/>
    </ligand>
</feature>
<feature type="modified residue" description="N-acetylalanine" evidence="2">
    <location>
        <position position="2"/>
    </location>
</feature>
<feature type="modified residue" description="Phosphothreonine" evidence="2">
    <location>
        <position position="24"/>
    </location>
</feature>
<feature type="modified residue" description="N6-acetyllysine" evidence="2">
    <location>
        <position position="60"/>
    </location>
</feature>
<feature type="modified residue" description="N6-acetyllysine; alternate" evidence="2">
    <location>
        <position position="71"/>
    </location>
</feature>
<feature type="modified residue" description="N6-acetyllysine" evidence="2">
    <location>
        <position position="99"/>
    </location>
</feature>
<feature type="modified residue" description="N6-acetyllysine" evidence="2">
    <location>
        <position position="134"/>
    </location>
</feature>
<feature type="modified residue" description="N6-acetyllysine; alternate" evidence="2">
    <location>
        <position position="159"/>
    </location>
</feature>
<feature type="modified residue" description="N6-succinyllysine; alternate" evidence="3">
    <location>
        <position position="159"/>
    </location>
</feature>
<feature type="cross-link" description="Glycyl lysine isopeptide (Lys-Gly) (interchain with G-Cter in SUMO2); alternate" evidence="2">
    <location>
        <position position="71"/>
    </location>
</feature>
<feature type="cross-link" description="Glycyl lysine isopeptide (Lys-Gly) (interchain with G-Cter in ubiquitin); alternate" evidence="2">
    <location>
        <position position="71"/>
    </location>
</feature>
<feature type="sequence conflict" description="In Ref. 2; BAB24542." evidence="6" ref="2">
    <original>Q</original>
    <variation>R</variation>
    <location>
        <position position="8"/>
    </location>
</feature>
<accession>Q61820</accession>
<accession>Q4FZF4</accession>
<accession>Q6P8M7</accession>
<accession>Q80YD4</accession>
<accession>Q9D9Y0</accession>
<reference key="1">
    <citation type="journal article" date="1994" name="Mamm. Genome">
        <title>Tissue-specific expression of Ran isoforms in the mouse.</title>
        <authorList>
            <person name="Coutavas E.E."/>
            <person name="Hsieh C.M."/>
            <person name="Ren M."/>
            <person name="Drivas G.T."/>
            <person name="Rush M.G."/>
            <person name="D'Eustachio P.D."/>
        </authorList>
    </citation>
    <scope>NUCLEOTIDE SEQUENCE [MRNA]</scope>
    <scope>TISSUE SPECIFICITY</scope>
    <source>
        <tissue>Testis</tissue>
    </source>
</reference>
<reference key="2">
    <citation type="journal article" date="2005" name="Science">
        <title>The transcriptional landscape of the mammalian genome.</title>
        <authorList>
            <person name="Carninci P."/>
            <person name="Kasukawa T."/>
            <person name="Katayama S."/>
            <person name="Gough J."/>
            <person name="Frith M.C."/>
            <person name="Maeda N."/>
            <person name="Oyama R."/>
            <person name="Ravasi T."/>
            <person name="Lenhard B."/>
            <person name="Wells C."/>
            <person name="Kodzius R."/>
            <person name="Shimokawa K."/>
            <person name="Bajic V.B."/>
            <person name="Brenner S.E."/>
            <person name="Batalov S."/>
            <person name="Forrest A.R."/>
            <person name="Zavolan M."/>
            <person name="Davis M.J."/>
            <person name="Wilming L.G."/>
            <person name="Aidinis V."/>
            <person name="Allen J.E."/>
            <person name="Ambesi-Impiombato A."/>
            <person name="Apweiler R."/>
            <person name="Aturaliya R.N."/>
            <person name="Bailey T.L."/>
            <person name="Bansal M."/>
            <person name="Baxter L."/>
            <person name="Beisel K.W."/>
            <person name="Bersano T."/>
            <person name="Bono H."/>
            <person name="Chalk A.M."/>
            <person name="Chiu K.P."/>
            <person name="Choudhary V."/>
            <person name="Christoffels A."/>
            <person name="Clutterbuck D.R."/>
            <person name="Crowe M.L."/>
            <person name="Dalla E."/>
            <person name="Dalrymple B.P."/>
            <person name="de Bono B."/>
            <person name="Della Gatta G."/>
            <person name="di Bernardo D."/>
            <person name="Down T."/>
            <person name="Engstrom P."/>
            <person name="Fagiolini M."/>
            <person name="Faulkner G."/>
            <person name="Fletcher C.F."/>
            <person name="Fukushima T."/>
            <person name="Furuno M."/>
            <person name="Futaki S."/>
            <person name="Gariboldi M."/>
            <person name="Georgii-Hemming P."/>
            <person name="Gingeras T.R."/>
            <person name="Gojobori T."/>
            <person name="Green R.E."/>
            <person name="Gustincich S."/>
            <person name="Harbers M."/>
            <person name="Hayashi Y."/>
            <person name="Hensch T.K."/>
            <person name="Hirokawa N."/>
            <person name="Hill D."/>
            <person name="Huminiecki L."/>
            <person name="Iacono M."/>
            <person name="Ikeo K."/>
            <person name="Iwama A."/>
            <person name="Ishikawa T."/>
            <person name="Jakt M."/>
            <person name="Kanapin A."/>
            <person name="Katoh M."/>
            <person name="Kawasawa Y."/>
            <person name="Kelso J."/>
            <person name="Kitamura H."/>
            <person name="Kitano H."/>
            <person name="Kollias G."/>
            <person name="Krishnan S.P."/>
            <person name="Kruger A."/>
            <person name="Kummerfeld S.K."/>
            <person name="Kurochkin I.V."/>
            <person name="Lareau L.F."/>
            <person name="Lazarevic D."/>
            <person name="Lipovich L."/>
            <person name="Liu J."/>
            <person name="Liuni S."/>
            <person name="McWilliam S."/>
            <person name="Madan Babu M."/>
            <person name="Madera M."/>
            <person name="Marchionni L."/>
            <person name="Matsuda H."/>
            <person name="Matsuzawa S."/>
            <person name="Miki H."/>
            <person name="Mignone F."/>
            <person name="Miyake S."/>
            <person name="Morris K."/>
            <person name="Mottagui-Tabar S."/>
            <person name="Mulder N."/>
            <person name="Nakano N."/>
            <person name="Nakauchi H."/>
            <person name="Ng P."/>
            <person name="Nilsson R."/>
            <person name="Nishiguchi S."/>
            <person name="Nishikawa S."/>
            <person name="Nori F."/>
            <person name="Ohara O."/>
            <person name="Okazaki Y."/>
            <person name="Orlando V."/>
            <person name="Pang K.C."/>
            <person name="Pavan W.J."/>
            <person name="Pavesi G."/>
            <person name="Pesole G."/>
            <person name="Petrovsky N."/>
            <person name="Piazza S."/>
            <person name="Reed J."/>
            <person name="Reid J.F."/>
            <person name="Ring B.Z."/>
            <person name="Ringwald M."/>
            <person name="Rost B."/>
            <person name="Ruan Y."/>
            <person name="Salzberg S.L."/>
            <person name="Sandelin A."/>
            <person name="Schneider C."/>
            <person name="Schoenbach C."/>
            <person name="Sekiguchi K."/>
            <person name="Semple C.A."/>
            <person name="Seno S."/>
            <person name="Sessa L."/>
            <person name="Sheng Y."/>
            <person name="Shibata Y."/>
            <person name="Shimada H."/>
            <person name="Shimada K."/>
            <person name="Silva D."/>
            <person name="Sinclair B."/>
            <person name="Sperling S."/>
            <person name="Stupka E."/>
            <person name="Sugiura K."/>
            <person name="Sultana R."/>
            <person name="Takenaka Y."/>
            <person name="Taki K."/>
            <person name="Tammoja K."/>
            <person name="Tan S.L."/>
            <person name="Tang S."/>
            <person name="Taylor M.S."/>
            <person name="Tegner J."/>
            <person name="Teichmann S.A."/>
            <person name="Ueda H.R."/>
            <person name="van Nimwegen E."/>
            <person name="Verardo R."/>
            <person name="Wei C.L."/>
            <person name="Yagi K."/>
            <person name="Yamanishi H."/>
            <person name="Zabarovsky E."/>
            <person name="Zhu S."/>
            <person name="Zimmer A."/>
            <person name="Hide W."/>
            <person name="Bult C."/>
            <person name="Grimmond S.M."/>
            <person name="Teasdale R.D."/>
            <person name="Liu E.T."/>
            <person name="Brusic V."/>
            <person name="Quackenbush J."/>
            <person name="Wahlestedt C."/>
            <person name="Mattick J.S."/>
            <person name="Hume D.A."/>
            <person name="Kai C."/>
            <person name="Sasaki D."/>
            <person name="Tomaru Y."/>
            <person name="Fukuda S."/>
            <person name="Kanamori-Katayama M."/>
            <person name="Suzuki M."/>
            <person name="Aoki J."/>
            <person name="Arakawa T."/>
            <person name="Iida J."/>
            <person name="Imamura K."/>
            <person name="Itoh M."/>
            <person name="Kato T."/>
            <person name="Kawaji H."/>
            <person name="Kawagashira N."/>
            <person name="Kawashima T."/>
            <person name="Kojima M."/>
            <person name="Kondo S."/>
            <person name="Konno H."/>
            <person name="Nakano K."/>
            <person name="Ninomiya N."/>
            <person name="Nishio T."/>
            <person name="Okada M."/>
            <person name="Plessy C."/>
            <person name="Shibata K."/>
            <person name="Shiraki T."/>
            <person name="Suzuki S."/>
            <person name="Tagami M."/>
            <person name="Waki K."/>
            <person name="Watahiki A."/>
            <person name="Okamura-Oho Y."/>
            <person name="Suzuki H."/>
            <person name="Kawai J."/>
            <person name="Hayashizaki Y."/>
        </authorList>
    </citation>
    <scope>NUCLEOTIDE SEQUENCE [LARGE SCALE MRNA]</scope>
    <source>
        <strain>C57BL/6J</strain>
        <tissue>Testis</tissue>
    </source>
</reference>
<reference key="3">
    <citation type="journal article" date="2004" name="Genome Res.">
        <title>The status, quality, and expansion of the NIH full-length cDNA project: the Mammalian Gene Collection (MGC).</title>
        <authorList>
            <consortium name="The MGC Project Team"/>
        </authorList>
    </citation>
    <scope>NUCLEOTIDE SEQUENCE [LARGE SCALE MRNA]</scope>
    <source>
        <tissue>Testis</tissue>
    </source>
</reference>
<proteinExistence type="evidence at transcript level"/>
<protein>
    <recommendedName>
        <fullName>GTP-binding nuclear protein Ran, testis-specific isoform</fullName>
        <ecNumber evidence="2">3.6.5.-</ecNumber>
    </recommendedName>
</protein>
<gene>
    <name type="primary">Rasl2-9</name>
</gene>
<dbReference type="EC" id="3.6.5.-" evidence="2"/>
<dbReference type="EMBL" id="L32752">
    <property type="protein sequence ID" value="AAA64248.1"/>
    <property type="molecule type" value="mRNA"/>
</dbReference>
<dbReference type="EMBL" id="AK006350">
    <property type="protein sequence ID" value="BAB24542.1"/>
    <property type="molecule type" value="mRNA"/>
</dbReference>
<dbReference type="EMBL" id="BC049619">
    <property type="protein sequence ID" value="AAH49619.1"/>
    <property type="status" value="ALT_INIT"/>
    <property type="molecule type" value="mRNA"/>
</dbReference>
<dbReference type="EMBL" id="BC061180">
    <property type="protein sequence ID" value="AAH61180.2"/>
    <property type="molecule type" value="mRNA"/>
</dbReference>
<dbReference type="EMBL" id="BC099553">
    <property type="protein sequence ID" value="AAH99553.2"/>
    <property type="molecule type" value="mRNA"/>
</dbReference>
<dbReference type="CCDS" id="CCDS20760.1"/>
<dbReference type="PIR" id="I76676">
    <property type="entry name" value="I76676"/>
</dbReference>
<dbReference type="RefSeq" id="NP_033054.1">
    <property type="nucleotide sequence ID" value="NM_009028.2"/>
</dbReference>
<dbReference type="SMR" id="Q61820"/>
<dbReference type="BioGRID" id="202603">
    <property type="interactions" value="3"/>
</dbReference>
<dbReference type="FunCoup" id="Q61820">
    <property type="interactions" value="2450"/>
</dbReference>
<dbReference type="IntAct" id="Q61820">
    <property type="interactions" value="1"/>
</dbReference>
<dbReference type="MINT" id="Q61820"/>
<dbReference type="STRING" id="10090.ENSMUSP00000129559"/>
<dbReference type="iPTMnet" id="Q61820"/>
<dbReference type="PhosphoSitePlus" id="Q61820"/>
<dbReference type="SwissPalm" id="Q61820"/>
<dbReference type="jPOST" id="Q61820"/>
<dbReference type="PaxDb" id="10090-ENSMUSP00000129559"/>
<dbReference type="ProteomicsDB" id="254897"/>
<dbReference type="DNASU" id="19428"/>
<dbReference type="Ensembl" id="ENSMUST00000147835.4">
    <property type="protein sequence ID" value="ENSMUSP00000129559.2"/>
    <property type="gene ID" value="ENSMUSG00000083649.6"/>
</dbReference>
<dbReference type="GeneID" id="19428"/>
<dbReference type="KEGG" id="mmu:19428"/>
<dbReference type="UCSC" id="uc009fac.1">
    <property type="organism name" value="mouse"/>
</dbReference>
<dbReference type="AGR" id="MGI:104605"/>
<dbReference type="CTD" id="19428"/>
<dbReference type="MGI" id="MGI:104605">
    <property type="gene designation" value="Rasl2-9"/>
</dbReference>
<dbReference type="VEuPathDB" id="HostDB:ENSMUSG00000083649"/>
<dbReference type="eggNOG" id="KOG0096">
    <property type="taxonomic scope" value="Eukaryota"/>
</dbReference>
<dbReference type="GeneTree" id="ENSGT00940000153786"/>
<dbReference type="HOGENOM" id="CLU_041217_13_0_1"/>
<dbReference type="InParanoid" id="Q61820"/>
<dbReference type="OMA" id="FFWLARK"/>
<dbReference type="OrthoDB" id="48625at2759"/>
<dbReference type="PhylomeDB" id="Q61820"/>
<dbReference type="TreeFam" id="TF106302"/>
<dbReference type="BioGRID-ORCS" id="19428">
    <property type="hits" value="5 hits in 79 CRISPR screens"/>
</dbReference>
<dbReference type="PRO" id="PR:Q61820"/>
<dbReference type="Proteomes" id="UP000000589">
    <property type="component" value="Chromosome 7"/>
</dbReference>
<dbReference type="RNAct" id="Q61820">
    <property type="molecule type" value="protein"/>
</dbReference>
<dbReference type="Bgee" id="ENSMUSG00000083649">
    <property type="expression patterns" value="Expressed in spermatid and 50 other cell types or tissues"/>
</dbReference>
<dbReference type="ExpressionAtlas" id="Q61820">
    <property type="expression patterns" value="baseline and differential"/>
</dbReference>
<dbReference type="GO" id="GO:0005634">
    <property type="term" value="C:nucleus"/>
    <property type="evidence" value="ECO:0007669"/>
    <property type="project" value="UniProtKB-SubCell"/>
</dbReference>
<dbReference type="GO" id="GO:0005525">
    <property type="term" value="F:GTP binding"/>
    <property type="evidence" value="ECO:0007669"/>
    <property type="project" value="UniProtKB-KW"/>
</dbReference>
<dbReference type="GO" id="GO:0003924">
    <property type="term" value="F:GTPase activity"/>
    <property type="evidence" value="ECO:0007669"/>
    <property type="project" value="InterPro"/>
</dbReference>
<dbReference type="GO" id="GO:0006913">
    <property type="term" value="P:nucleocytoplasmic transport"/>
    <property type="evidence" value="ECO:0007669"/>
    <property type="project" value="InterPro"/>
</dbReference>
<dbReference type="GO" id="GO:0015031">
    <property type="term" value="P:protein transport"/>
    <property type="evidence" value="ECO:0007669"/>
    <property type="project" value="UniProtKB-KW"/>
</dbReference>
<dbReference type="CDD" id="cd00877">
    <property type="entry name" value="Ran"/>
    <property type="match status" value="1"/>
</dbReference>
<dbReference type="FunFam" id="3.40.50.300:FF:000131">
    <property type="entry name" value="GTP-binding nuclear protein Ran"/>
    <property type="match status" value="1"/>
</dbReference>
<dbReference type="Gene3D" id="3.40.50.300">
    <property type="entry name" value="P-loop containing nucleotide triphosphate hydrolases"/>
    <property type="match status" value="1"/>
</dbReference>
<dbReference type="InterPro" id="IPR027417">
    <property type="entry name" value="P-loop_NTPase"/>
</dbReference>
<dbReference type="InterPro" id="IPR002041">
    <property type="entry name" value="Ran_GTPase"/>
</dbReference>
<dbReference type="InterPro" id="IPR005225">
    <property type="entry name" value="Small_GTP-bd"/>
</dbReference>
<dbReference type="InterPro" id="IPR001806">
    <property type="entry name" value="Small_GTPase"/>
</dbReference>
<dbReference type="NCBIfam" id="TIGR00231">
    <property type="entry name" value="small_GTP"/>
    <property type="match status" value="1"/>
</dbReference>
<dbReference type="PANTHER" id="PTHR24071:SF2">
    <property type="entry name" value="GTP-BINDING NUCLEAR PROTEIN RAN, TESTIS-SPECIFIC ISOFORM"/>
    <property type="match status" value="1"/>
</dbReference>
<dbReference type="PANTHER" id="PTHR24071">
    <property type="entry name" value="RAN GTPASE"/>
    <property type="match status" value="1"/>
</dbReference>
<dbReference type="Pfam" id="PF00071">
    <property type="entry name" value="Ras"/>
    <property type="match status" value="1"/>
</dbReference>
<dbReference type="PRINTS" id="PR00627">
    <property type="entry name" value="GTPRANTC4"/>
</dbReference>
<dbReference type="SMART" id="SM00175">
    <property type="entry name" value="RAB"/>
    <property type="match status" value="1"/>
</dbReference>
<dbReference type="SMART" id="SM00176">
    <property type="entry name" value="RAN"/>
    <property type="match status" value="1"/>
</dbReference>
<dbReference type="SMART" id="SM00173">
    <property type="entry name" value="RAS"/>
    <property type="match status" value="1"/>
</dbReference>
<dbReference type="SMART" id="SM00174">
    <property type="entry name" value="RHO"/>
    <property type="match status" value="1"/>
</dbReference>
<dbReference type="SUPFAM" id="SSF52540">
    <property type="entry name" value="P-loop containing nucleoside triphosphate hydrolases"/>
    <property type="match status" value="1"/>
</dbReference>
<dbReference type="PROSITE" id="PS51418">
    <property type="entry name" value="RAN"/>
    <property type="match status" value="1"/>
</dbReference>
<organism>
    <name type="scientific">Mus musculus</name>
    <name type="common">Mouse</name>
    <dbReference type="NCBI Taxonomy" id="10090"/>
    <lineage>
        <taxon>Eukaryota</taxon>
        <taxon>Metazoa</taxon>
        <taxon>Chordata</taxon>
        <taxon>Craniata</taxon>
        <taxon>Vertebrata</taxon>
        <taxon>Euteleostomi</taxon>
        <taxon>Mammalia</taxon>
        <taxon>Eutheria</taxon>
        <taxon>Euarchontoglires</taxon>
        <taxon>Glires</taxon>
        <taxon>Rodentia</taxon>
        <taxon>Myomorpha</taxon>
        <taxon>Muroidea</taxon>
        <taxon>Muridae</taxon>
        <taxon>Murinae</taxon>
        <taxon>Mus</taxon>
        <taxon>Mus</taxon>
    </lineage>
</organism>
<name>RANT_MOUSE</name>
<evidence type="ECO:0000250" key="1"/>
<evidence type="ECO:0000250" key="2">
    <source>
        <dbReference type="UniProtKB" id="P62826"/>
    </source>
</evidence>
<evidence type="ECO:0000250" key="3">
    <source>
        <dbReference type="UniProtKB" id="P62827"/>
    </source>
</evidence>
<evidence type="ECO:0000255" key="4">
    <source>
        <dbReference type="PROSITE-ProRule" id="PRU00752"/>
    </source>
</evidence>
<evidence type="ECO:0000269" key="5">
    <source>
    </source>
</evidence>
<evidence type="ECO:0000305" key="6"/>
<keyword id="KW-0007">Acetylation</keyword>
<keyword id="KW-0342">GTP-binding</keyword>
<keyword id="KW-0378">Hydrolase</keyword>
<keyword id="KW-1017">Isopeptide bond</keyword>
<keyword id="KW-0547">Nucleotide-binding</keyword>
<keyword id="KW-0539">Nucleus</keyword>
<keyword id="KW-0597">Phosphoprotein</keyword>
<keyword id="KW-0653">Protein transport</keyword>
<keyword id="KW-1185">Reference proteome</keyword>
<keyword id="KW-0813">Transport</keyword>
<keyword id="KW-0832">Ubl conjugation</keyword>
<sequence>MAAQGEPQVQFKVVLVGDGGTGKTTFMKRHLTGEFEKEYVATLGVEVHTLVFHTNRGPIKFNVWDTAGQEKFGGLRDGYYIQAQCAIIMFDVTSRVTYKNVPSWHKDLVRVCENIPIVLCGNKVDVKDMKVKAKPILFHRKKNLQYYDISARSNYNFEKPFFWLARKLIGDPNLEFVAMPALAPPEVVMDPALAAQYEHDLEVAQTTALPDEEDDL</sequence>
<comment type="function">
    <text evidence="2">GTP-binding protein involved in nucleocytoplasmic transport (By similarity). Required for the import of protein into the nucleus and also for RNA export (By similarity). Involved in chromatin condensation and control of cell cycle (By similarity).</text>
</comment>
<comment type="catalytic activity">
    <reaction evidence="2">
        <text>GTP + H2O = GDP + phosphate + H(+)</text>
        <dbReference type="Rhea" id="RHEA:19669"/>
        <dbReference type="ChEBI" id="CHEBI:15377"/>
        <dbReference type="ChEBI" id="CHEBI:15378"/>
        <dbReference type="ChEBI" id="CHEBI:37565"/>
        <dbReference type="ChEBI" id="CHEBI:43474"/>
        <dbReference type="ChEBI" id="CHEBI:58189"/>
    </reaction>
    <physiologicalReaction direction="left-to-right" evidence="2">
        <dbReference type="Rhea" id="RHEA:19670"/>
    </physiologicalReaction>
</comment>
<comment type="subcellular location">
    <subcellularLocation>
        <location evidence="2">Nucleus</location>
    </subcellularLocation>
</comment>
<comment type="tissue specificity">
    <text evidence="5">Testis specific.</text>
</comment>
<comment type="similarity">
    <text evidence="4 6">Belongs to the small GTPase superfamily. Ran family.</text>
</comment>
<comment type="sequence caution" evidence="6">
    <conflict type="erroneous initiation">
        <sequence resource="EMBL-CDS" id="AAH49619"/>
    </conflict>
</comment>